<gene>
    <name type="primary">scpA</name>
    <name type="ordered locus">M6_Spy1718</name>
</gene>
<name>C5AP_STRP6</name>
<accession>Q5X9R0</accession>
<protein>
    <recommendedName>
        <fullName>C5a peptidase</fullName>
        <ecNumber evidence="2">3.4.21.110</ecNumber>
    </recommendedName>
    <alternativeName>
        <fullName>SCP</fullName>
    </alternativeName>
</protein>
<comment type="function">
    <text evidence="2">This virulence factor of S.pyogenes specifically cleaves the human serum chemotaxin C5a at '68-Lys-|-Asp-69' bond near its C-terminus, destroying its ability to serve as a chemoattractant.</text>
</comment>
<comment type="catalytic activity">
    <reaction evidence="2">
        <text>The primary cleavage site is at 67-His-|-Lys-68 in human C5a with a minor secondary cleavage site at 58-Ala-|-Ser-59.</text>
        <dbReference type="EC" id="3.4.21.110"/>
    </reaction>
</comment>
<comment type="subcellular location">
    <subcellularLocation>
        <location evidence="4">Secreted</location>
        <location evidence="4">Cell wall</location>
        <topology evidence="4">Peptidoglycan-anchor</topology>
    </subcellularLocation>
</comment>
<comment type="PTM">
    <text evidence="3">Cleaved by SpeB protease; leading to its degradation. Degradation by SpeB is probably strictly regulated to preserve integrity of C5a peptidase.</text>
</comment>
<comment type="similarity">
    <text evidence="7">Belongs to the peptidase S8 family.</text>
</comment>
<evidence type="ECO:0000250" key="1"/>
<evidence type="ECO:0000250" key="2">
    <source>
        <dbReference type="UniProtKB" id="P15926"/>
    </source>
</evidence>
<evidence type="ECO:0000250" key="3">
    <source>
        <dbReference type="UniProtKB" id="P58099"/>
    </source>
</evidence>
<evidence type="ECO:0000255" key="4">
    <source>
        <dbReference type="PROSITE-ProRule" id="PRU00477"/>
    </source>
</evidence>
<evidence type="ECO:0000255" key="5">
    <source>
        <dbReference type="PROSITE-ProRule" id="PRU01240"/>
    </source>
</evidence>
<evidence type="ECO:0000256" key="6">
    <source>
        <dbReference type="SAM" id="MobiDB-lite"/>
    </source>
</evidence>
<evidence type="ECO:0000305" key="7"/>
<keyword id="KW-0134">Cell wall</keyword>
<keyword id="KW-0378">Hydrolase</keyword>
<keyword id="KW-0572">Peptidoglycan-anchor</keyword>
<keyword id="KW-0645">Protease</keyword>
<keyword id="KW-0677">Repeat</keyword>
<keyword id="KW-0964">Secreted</keyword>
<keyword id="KW-0720">Serine protease</keyword>
<keyword id="KW-0732">Signal</keyword>
<keyword id="KW-0843">Virulence</keyword>
<organism>
    <name type="scientific">Streptococcus pyogenes serotype M6 (strain ATCC BAA-946 / MGAS10394)</name>
    <dbReference type="NCBI Taxonomy" id="286636"/>
    <lineage>
        <taxon>Bacteria</taxon>
        <taxon>Bacillati</taxon>
        <taxon>Bacillota</taxon>
        <taxon>Bacilli</taxon>
        <taxon>Lactobacillales</taxon>
        <taxon>Streptococcaceae</taxon>
        <taxon>Streptococcus</taxon>
    </lineage>
</organism>
<reference key="1">
    <citation type="journal article" date="2004" name="J. Infect. Dis.">
        <title>Progress toward characterization of the group A Streptococcus metagenome: complete genome sequence of a macrolide-resistant serotype M6 strain.</title>
        <authorList>
            <person name="Banks D.J."/>
            <person name="Porcella S.F."/>
            <person name="Barbian K.D."/>
            <person name="Beres S.B."/>
            <person name="Philips L.E."/>
            <person name="Voyich J.M."/>
            <person name="DeLeo F.R."/>
            <person name="Martin J.M."/>
            <person name="Somerville G.A."/>
            <person name="Musser J.M."/>
        </authorList>
    </citation>
    <scope>NUCLEOTIDE SEQUENCE [LARGE SCALE GENOMIC DNA]</scope>
    <source>
        <strain>ATCC BAA-946 / MGAS10394</strain>
    </source>
</reference>
<dbReference type="EC" id="3.4.21.110" evidence="2"/>
<dbReference type="EMBL" id="CP000003">
    <property type="protein sequence ID" value="AAT87853.1"/>
    <property type="molecule type" value="Genomic_DNA"/>
</dbReference>
<dbReference type="RefSeq" id="WP_011185014.1">
    <property type="nucleotide sequence ID" value="NC_006086.1"/>
</dbReference>
<dbReference type="SMR" id="Q5X9R0"/>
<dbReference type="MEROPS" id="S08.020"/>
<dbReference type="KEGG" id="spa:M6_Spy1718"/>
<dbReference type="HOGENOM" id="CLU_001768_3_0_9"/>
<dbReference type="Proteomes" id="UP000001167">
    <property type="component" value="Chromosome"/>
</dbReference>
<dbReference type="GO" id="GO:0005576">
    <property type="term" value="C:extracellular region"/>
    <property type="evidence" value="ECO:0007669"/>
    <property type="project" value="UniProtKB-KW"/>
</dbReference>
<dbReference type="GO" id="GO:0016020">
    <property type="term" value="C:membrane"/>
    <property type="evidence" value="ECO:0007669"/>
    <property type="project" value="InterPro"/>
</dbReference>
<dbReference type="GO" id="GO:0004252">
    <property type="term" value="F:serine-type endopeptidase activity"/>
    <property type="evidence" value="ECO:0007669"/>
    <property type="project" value="InterPro"/>
</dbReference>
<dbReference type="GO" id="GO:0006508">
    <property type="term" value="P:proteolysis"/>
    <property type="evidence" value="ECO:0007669"/>
    <property type="project" value="UniProtKB-KW"/>
</dbReference>
<dbReference type="CDD" id="cd02133">
    <property type="entry name" value="PA_C5a_like"/>
    <property type="match status" value="1"/>
</dbReference>
<dbReference type="CDD" id="cd07475">
    <property type="entry name" value="Peptidases_S8_C5a_Peptidase"/>
    <property type="match status" value="1"/>
</dbReference>
<dbReference type="Gene3D" id="2.60.40.4070">
    <property type="match status" value="1"/>
</dbReference>
<dbReference type="Gene3D" id="3.50.30.30">
    <property type="match status" value="1"/>
</dbReference>
<dbReference type="Gene3D" id="2.60.40.10">
    <property type="entry name" value="Immunoglobulins"/>
    <property type="match status" value="1"/>
</dbReference>
<dbReference type="Gene3D" id="3.40.50.200">
    <property type="entry name" value="Peptidase S8/S53 domain"/>
    <property type="match status" value="1"/>
</dbReference>
<dbReference type="Gene3D" id="2.60.40.1710">
    <property type="entry name" value="Subtilisin-like superfamily"/>
    <property type="match status" value="1"/>
</dbReference>
<dbReference type="InterPro" id="IPR010435">
    <property type="entry name" value="C5a/SBT2-like_Fn3"/>
</dbReference>
<dbReference type="InterPro" id="IPR034216">
    <property type="entry name" value="C5a_Peptidase"/>
</dbReference>
<dbReference type="InterPro" id="IPR013783">
    <property type="entry name" value="Ig-like_fold"/>
</dbReference>
<dbReference type="InterPro" id="IPR019931">
    <property type="entry name" value="LPXTG_anchor"/>
</dbReference>
<dbReference type="InterPro" id="IPR046450">
    <property type="entry name" value="PA_dom_sf"/>
</dbReference>
<dbReference type="InterPro" id="IPR003137">
    <property type="entry name" value="PA_domain"/>
</dbReference>
<dbReference type="InterPro" id="IPR000209">
    <property type="entry name" value="Peptidase_S8/S53_dom"/>
</dbReference>
<dbReference type="InterPro" id="IPR036852">
    <property type="entry name" value="Peptidase_S8/S53_dom_sf"/>
</dbReference>
<dbReference type="InterPro" id="IPR023827">
    <property type="entry name" value="Peptidase_S8_Asp-AS"/>
</dbReference>
<dbReference type="InterPro" id="IPR022398">
    <property type="entry name" value="Peptidase_S8_His-AS"/>
</dbReference>
<dbReference type="InterPro" id="IPR023828">
    <property type="entry name" value="Peptidase_S8_Ser-AS"/>
</dbReference>
<dbReference type="InterPro" id="IPR050131">
    <property type="entry name" value="Peptidase_S8_subtilisin-like"/>
</dbReference>
<dbReference type="InterPro" id="IPR015500">
    <property type="entry name" value="Peptidase_S8_subtilisin-rel"/>
</dbReference>
<dbReference type="InterPro" id="IPR053869">
    <property type="entry name" value="ScpA_Fn3_3rd"/>
</dbReference>
<dbReference type="PANTHER" id="PTHR43806:SF11">
    <property type="entry name" value="CEREVISIN-RELATED"/>
    <property type="match status" value="1"/>
</dbReference>
<dbReference type="PANTHER" id="PTHR43806">
    <property type="entry name" value="PEPTIDASE S8"/>
    <property type="match status" value="1"/>
</dbReference>
<dbReference type="Pfam" id="PF13585">
    <property type="entry name" value="CHU_C"/>
    <property type="match status" value="1"/>
</dbReference>
<dbReference type="Pfam" id="PF06280">
    <property type="entry name" value="fn3_5"/>
    <property type="match status" value="1"/>
</dbReference>
<dbReference type="Pfam" id="PF02225">
    <property type="entry name" value="PA"/>
    <property type="match status" value="1"/>
</dbReference>
<dbReference type="Pfam" id="PF00082">
    <property type="entry name" value="Peptidase_S8"/>
    <property type="match status" value="1"/>
</dbReference>
<dbReference type="Pfam" id="PF22143">
    <property type="entry name" value="ScpA_C"/>
    <property type="match status" value="1"/>
</dbReference>
<dbReference type="PRINTS" id="PR00723">
    <property type="entry name" value="SUBTILISIN"/>
</dbReference>
<dbReference type="SUPFAM" id="SSF52025">
    <property type="entry name" value="PA domain"/>
    <property type="match status" value="1"/>
</dbReference>
<dbReference type="SUPFAM" id="SSF52743">
    <property type="entry name" value="Subtilisin-like"/>
    <property type="match status" value="1"/>
</dbReference>
<dbReference type="PROSITE" id="PS50847">
    <property type="entry name" value="GRAM_POS_ANCHORING"/>
    <property type="match status" value="1"/>
</dbReference>
<dbReference type="PROSITE" id="PS51892">
    <property type="entry name" value="SUBTILASE"/>
    <property type="match status" value="1"/>
</dbReference>
<dbReference type="PROSITE" id="PS00136">
    <property type="entry name" value="SUBTILASE_ASP"/>
    <property type="match status" value="1"/>
</dbReference>
<dbReference type="PROSITE" id="PS00137">
    <property type="entry name" value="SUBTILASE_HIS"/>
    <property type="match status" value="1"/>
</dbReference>
<dbReference type="PROSITE" id="PS00138">
    <property type="entry name" value="SUBTILASE_SER"/>
    <property type="match status" value="1"/>
</dbReference>
<sequence>MRKKQKLPFDKLAIALMSTSILLNAQSDIKANTVTEDTPATEQAVETPQPTAVSEEAPSSKETKTPQTPDDAEETVADKANDLAPQAPAKTTDTPATSKATIRDLNDPSQVKTLQEKAGKGAGTVVAVIDAGFDKNHEAWRLTDKTKARYQSKEDLEKAKKEHGITYGEWVNDKIAYYHDYSKDGKTAVDQEHGTHVSGILSGNAPSETKEPYRLEGAMPEAQLLLMRVEIVNGLADYARNYAQAIRDAVNLGAKVINMSFGNAALAYANLPDETKKAFDYAKSKGVSIVTSAGNDSSFGGKTRLPLADHPDYGVVGTPAAADSTLTVASYSPDKQLTETATVKTADQQDKEMPVLSTNRFEPNKAYDYAYANRGMKEDDFKDVKGKIALIERGDIDFKDKIANAKKAGAVGVLIYDNQDKGFPIELPNVDQMPAAFISRKDGLLLKENPQKTITFNATPKVLPTASGTKLSRFSSWGLTADGNIKPDIAAPGQDILSSVANNKYAKLSGTSMSAPLVAGIMGLLQKQYETQYPDMTPSERLDLAKKVLMSSATALYDEDEKAYFSPRQQGAGAVDAKKASAATMYVTDKDNTSSKVHLNNVSDTFEVTVTVHNKSDKPQELYYQATVQTDKVDGKHFALAPKALYETSWQKITIPANSSKQVTVPIDASRFSKDLLAQMKNGYFLEGFVRFKQDLTKEELMSIPYIGFRGDFGNLSALEKPIYDSKDGSSYYHEANSDAKDQLDGDGLQFYALKNNFTALTTESNPWMIIKAVKEGVENIEDIESSEITETIFAGTFAKQDDDSHYYIHRHANGKPYAAISPNGDGNRDYVQFQGTFLRNAKNLVAEVLDKEGNVVWTSEVTEQVVKNYNNDLASTLGSTRFEKTRWDGKDKDGKVVANGTYTYRVRYTPISSGAKEQHTDFDVIVDNTTPEVATSATFSTEDRRLTLASKPKTSQPVYRERIAYTYMDEDLPTTEYISPNEDGTFTLPEEAETMEGGTVPLKMSDFTYVVEDMAGNITYTPVTKLLEGHSNKPEQDGSDQVPDKKPETKPEQDGSGQAPDKKPETKPEQDGSGQAPDKKPEAKPEQDGSGQTPDKKPETKPEKDSSGQTPGKTPQKGQPSRTLEKRSSKRALATKASARDQLPTTNDKDTNRLHLLKLVMTTFFFGLVAHIFKTKRQKETKK</sequence>
<feature type="signal peptide" evidence="2">
    <location>
        <begin position="1"/>
        <end position="31"/>
    </location>
</feature>
<feature type="chain" id="PRO_0000027157" description="C5a peptidase" evidence="1">
    <location>
        <begin position="32"/>
        <end position="1147"/>
    </location>
</feature>
<feature type="propeptide" id="PRO_0000027158" description="Removed by sortase" evidence="4">
    <location>
        <begin position="1148"/>
        <end position="1184"/>
    </location>
</feature>
<feature type="domain" description="Peptidase S8" evidence="5">
    <location>
        <begin position="99"/>
        <end position="581"/>
    </location>
</feature>
<feature type="repeat" description="1">
    <location>
        <begin position="1034"/>
        <end position="1067"/>
    </location>
</feature>
<feature type="repeat" description="2">
    <location>
        <begin position="1068"/>
        <end position="1084"/>
    </location>
</feature>
<feature type="repeat" description="3">
    <location>
        <begin position="1085"/>
        <end position="1101"/>
    </location>
</feature>
<feature type="repeat" description="4">
    <location>
        <begin position="1102"/>
        <end position="1118"/>
    </location>
</feature>
<feature type="region of interest" description="Disordered" evidence="6">
    <location>
        <begin position="33"/>
        <end position="117"/>
    </location>
</feature>
<feature type="region of interest" description="Disordered" evidence="6">
    <location>
        <begin position="1029"/>
        <end position="1150"/>
    </location>
</feature>
<feature type="region of interest" description="4 X 17 AA tandem repeats">
    <location>
        <begin position="1034"/>
        <end position="1118"/>
    </location>
</feature>
<feature type="short sequence motif" description="LPXTG sorting signal" evidence="4">
    <location>
        <begin position="1144"/>
        <end position="1148"/>
    </location>
</feature>
<feature type="compositionally biased region" description="Polar residues" evidence="6">
    <location>
        <begin position="33"/>
        <end position="52"/>
    </location>
</feature>
<feature type="compositionally biased region" description="Polar residues" evidence="6">
    <location>
        <begin position="89"/>
        <end position="100"/>
    </location>
</feature>
<feature type="compositionally biased region" description="Basic and acidic residues" evidence="6">
    <location>
        <begin position="1029"/>
        <end position="1054"/>
    </location>
</feature>
<feature type="compositionally biased region" description="Basic and acidic residues" evidence="6">
    <location>
        <begin position="1061"/>
        <end position="1071"/>
    </location>
</feature>
<feature type="compositionally biased region" description="Basic and acidic residues" evidence="6">
    <location>
        <begin position="1078"/>
        <end position="1088"/>
    </location>
</feature>
<feature type="compositionally biased region" description="Basic and acidic residues" evidence="6">
    <location>
        <begin position="1095"/>
        <end position="1107"/>
    </location>
</feature>
<feature type="compositionally biased region" description="Polar residues" evidence="6">
    <location>
        <begin position="1109"/>
        <end position="1123"/>
    </location>
</feature>
<feature type="active site" description="Charge relay system" evidence="5">
    <location>
        <position position="130"/>
    </location>
</feature>
<feature type="active site" description="Charge relay system" evidence="5">
    <location>
        <position position="193"/>
    </location>
</feature>
<feature type="active site" description="Charge relay system" evidence="5">
    <location>
        <position position="512"/>
    </location>
</feature>
<feature type="modified residue" description="Pentaglycyl murein peptidoglycan amidated threonine" evidence="4">
    <location>
        <position position="1147"/>
    </location>
</feature>
<proteinExistence type="inferred from homology"/>